<organism>
    <name type="scientific">Methanosarcina acetivorans (strain ATCC 35395 / DSM 2834 / JCM 12185 / C2A)</name>
    <dbReference type="NCBI Taxonomy" id="188937"/>
    <lineage>
        <taxon>Archaea</taxon>
        <taxon>Methanobacteriati</taxon>
        <taxon>Methanobacteriota</taxon>
        <taxon>Stenosarchaea group</taxon>
        <taxon>Methanomicrobia</taxon>
        <taxon>Methanosarcinales</taxon>
        <taxon>Methanosarcinaceae</taxon>
        <taxon>Methanosarcina</taxon>
    </lineage>
</organism>
<feature type="chain" id="PRO_0000216470" description="Monomethylamine corrinoid protein 2">
    <location>
        <begin position="1"/>
        <end position="217"/>
    </location>
</feature>
<feature type="domain" description="B12-binding N-terminal" evidence="3">
    <location>
        <begin position="1"/>
        <end position="91"/>
    </location>
</feature>
<feature type="domain" description="B12-binding" evidence="2">
    <location>
        <begin position="93"/>
        <end position="217"/>
    </location>
</feature>
<feature type="binding site" description="axial binding residue" evidence="1">
    <location>
        <position position="106"/>
    </location>
    <ligand>
        <name>methylcob(III)alamin</name>
        <dbReference type="ChEBI" id="CHEBI:28115"/>
    </ligand>
    <ligandPart>
        <name>Co</name>
        <dbReference type="ChEBI" id="CHEBI:27638"/>
    </ligandPart>
</feature>
<proteinExistence type="inferred from homology"/>
<dbReference type="EMBL" id="AE010299">
    <property type="protein sequence ID" value="AAM06344.1"/>
    <property type="molecule type" value="Genomic_DNA"/>
</dbReference>
<dbReference type="RefSeq" id="WP_011022912.1">
    <property type="nucleotide sequence ID" value="NC_003552.1"/>
</dbReference>
<dbReference type="SMR" id="P58868"/>
<dbReference type="STRING" id="188937.MA_2971"/>
<dbReference type="EnsemblBacteria" id="AAM06344">
    <property type="protein sequence ID" value="AAM06344"/>
    <property type="gene ID" value="MA_2971"/>
</dbReference>
<dbReference type="GeneID" id="1474865"/>
<dbReference type="KEGG" id="mac:MA_2971"/>
<dbReference type="HOGENOM" id="CLU_082102_1_0_2"/>
<dbReference type="InParanoid" id="P58868"/>
<dbReference type="OrthoDB" id="134276at2157"/>
<dbReference type="PhylomeDB" id="P58868"/>
<dbReference type="UniPathway" id="UPA00643"/>
<dbReference type="Proteomes" id="UP000002487">
    <property type="component" value="Chromosome"/>
</dbReference>
<dbReference type="GO" id="GO:0031419">
    <property type="term" value="F:cobalamin binding"/>
    <property type="evidence" value="ECO:0007669"/>
    <property type="project" value="InterPro"/>
</dbReference>
<dbReference type="GO" id="GO:0050897">
    <property type="term" value="F:cobalt ion binding"/>
    <property type="evidence" value="ECO:0007669"/>
    <property type="project" value="InterPro"/>
</dbReference>
<dbReference type="GO" id="GO:0008168">
    <property type="term" value="F:methyltransferase activity"/>
    <property type="evidence" value="ECO:0007669"/>
    <property type="project" value="UniProtKB-ARBA"/>
</dbReference>
<dbReference type="GO" id="GO:0015948">
    <property type="term" value="P:methanogenesis"/>
    <property type="evidence" value="ECO:0007669"/>
    <property type="project" value="UniProtKB-KW"/>
</dbReference>
<dbReference type="CDD" id="cd02070">
    <property type="entry name" value="corrinoid_protein_B12-BD"/>
    <property type="match status" value="1"/>
</dbReference>
<dbReference type="FunFam" id="3.40.50.280:FF:000007">
    <property type="entry name" value="Monomethylamine corrinoid protein 1"/>
    <property type="match status" value="1"/>
</dbReference>
<dbReference type="FunFam" id="1.10.1240.10:FF:000004">
    <property type="entry name" value="Monomethylamine methyltransferase corrinoid protein"/>
    <property type="match status" value="1"/>
</dbReference>
<dbReference type="Gene3D" id="3.40.50.280">
    <property type="entry name" value="Cobalamin-binding domain"/>
    <property type="match status" value="1"/>
</dbReference>
<dbReference type="Gene3D" id="1.10.1240.10">
    <property type="entry name" value="Methionine synthase domain"/>
    <property type="match status" value="1"/>
</dbReference>
<dbReference type="InterPro" id="IPR003759">
    <property type="entry name" value="Cbl-bd_cap"/>
</dbReference>
<dbReference type="InterPro" id="IPR006158">
    <property type="entry name" value="Cobalamin-bd"/>
</dbReference>
<dbReference type="InterPro" id="IPR036724">
    <property type="entry name" value="Cobalamin-bd_sf"/>
</dbReference>
<dbReference type="InterPro" id="IPR012741">
    <property type="entry name" value="Corrinoid_p"/>
</dbReference>
<dbReference type="InterPro" id="IPR050554">
    <property type="entry name" value="Met_Synthase/Corrinoid"/>
</dbReference>
<dbReference type="InterPro" id="IPR036594">
    <property type="entry name" value="Meth_synthase_dom"/>
</dbReference>
<dbReference type="NCBIfam" id="TIGR02370">
    <property type="entry name" value="pyl_corrinoid"/>
    <property type="match status" value="1"/>
</dbReference>
<dbReference type="PANTHER" id="PTHR45833">
    <property type="entry name" value="METHIONINE SYNTHASE"/>
    <property type="match status" value="1"/>
</dbReference>
<dbReference type="PANTHER" id="PTHR45833:SF1">
    <property type="entry name" value="METHIONINE SYNTHASE"/>
    <property type="match status" value="1"/>
</dbReference>
<dbReference type="Pfam" id="PF02310">
    <property type="entry name" value="B12-binding"/>
    <property type="match status" value="1"/>
</dbReference>
<dbReference type="Pfam" id="PF02607">
    <property type="entry name" value="B12-binding_2"/>
    <property type="match status" value="1"/>
</dbReference>
<dbReference type="SMART" id="SM01018">
    <property type="entry name" value="B12-binding_2"/>
    <property type="match status" value="1"/>
</dbReference>
<dbReference type="SUPFAM" id="SSF52242">
    <property type="entry name" value="Cobalamin (vitamin B12)-binding domain"/>
    <property type="match status" value="1"/>
</dbReference>
<dbReference type="SUPFAM" id="SSF47644">
    <property type="entry name" value="Methionine synthase domain"/>
    <property type="match status" value="1"/>
</dbReference>
<dbReference type="PROSITE" id="PS51332">
    <property type="entry name" value="B12_BINDING"/>
    <property type="match status" value="1"/>
</dbReference>
<dbReference type="PROSITE" id="PS51337">
    <property type="entry name" value="B12_BINDING_NTER"/>
    <property type="match status" value="1"/>
</dbReference>
<comment type="function">
    <text evidence="1">Acts as a methyl group carrier between MtmB and MtbA.</text>
</comment>
<comment type="pathway">
    <text>One-carbon metabolism; methanogenesis from methylamine.</text>
</comment>
<comment type="subunit">
    <text evidence="1">Can form a complex with MtmB.</text>
</comment>
<comment type="similarity">
    <text evidence="4">Belongs to the methylamine corrinoid protein family.</text>
</comment>
<gene>
    <name type="primary">mtmC2</name>
    <name type="ordered locus">MA_2971</name>
</gene>
<protein>
    <recommendedName>
        <fullName>Monomethylamine corrinoid protein 2</fullName>
        <shortName>MMCP 2</shortName>
    </recommendedName>
</protein>
<reference key="1">
    <citation type="journal article" date="2002" name="Genome Res.">
        <title>The genome of Methanosarcina acetivorans reveals extensive metabolic and physiological diversity.</title>
        <authorList>
            <person name="Galagan J.E."/>
            <person name="Nusbaum C."/>
            <person name="Roy A."/>
            <person name="Endrizzi M.G."/>
            <person name="Macdonald P."/>
            <person name="FitzHugh W."/>
            <person name="Calvo S."/>
            <person name="Engels R."/>
            <person name="Smirnov S."/>
            <person name="Atnoor D."/>
            <person name="Brown A."/>
            <person name="Allen N."/>
            <person name="Naylor J."/>
            <person name="Stange-Thomann N."/>
            <person name="DeArellano K."/>
            <person name="Johnson R."/>
            <person name="Linton L."/>
            <person name="McEwan P."/>
            <person name="McKernan K."/>
            <person name="Talamas J."/>
            <person name="Tirrell A."/>
            <person name="Ye W."/>
            <person name="Zimmer A."/>
            <person name="Barber R.D."/>
            <person name="Cann I."/>
            <person name="Graham D.E."/>
            <person name="Grahame D.A."/>
            <person name="Guss A.M."/>
            <person name="Hedderich R."/>
            <person name="Ingram-Smith C."/>
            <person name="Kuettner H.C."/>
            <person name="Krzycki J.A."/>
            <person name="Leigh J.A."/>
            <person name="Li W."/>
            <person name="Liu J."/>
            <person name="Mukhopadhyay B."/>
            <person name="Reeve J.N."/>
            <person name="Smith K."/>
            <person name="Springer T.A."/>
            <person name="Umayam L.A."/>
            <person name="White O."/>
            <person name="White R.H."/>
            <person name="de Macario E.C."/>
            <person name="Ferry J.G."/>
            <person name="Jarrell K.F."/>
            <person name="Jing H."/>
            <person name="Macario A.J.L."/>
            <person name="Paulsen I.T."/>
            <person name="Pritchett M."/>
            <person name="Sowers K.R."/>
            <person name="Swanson R.V."/>
            <person name="Zinder S.H."/>
            <person name="Lander E."/>
            <person name="Metcalf W.W."/>
            <person name="Birren B."/>
        </authorList>
    </citation>
    <scope>NUCLEOTIDE SEQUENCE [LARGE SCALE GENOMIC DNA]</scope>
    <source>
        <strain>ATCC 35395 / DSM 2834 / JCM 12185 / C2A</strain>
    </source>
</reference>
<sequence>MTNTEIFEKLTNAIVTQNIAGCVQLTQEALDAGIPPIDIITKGLSPGMKIIGDKFEAAEIFLPQIMMSAKAMSSAMEILTPELEKSKVEGEETGLAITFVAEGDIHDIGHRLVTTMLGANGFEILDLGVDVLNENVVEEAAKHKGQKVILVGSALMTTSMLGQKDLMDRLREEKLRDSLKCMFGGAPVSSKWIEEIGADATAENAAEAAKVALNIMK</sequence>
<keyword id="KW-0170">Cobalt</keyword>
<keyword id="KW-0479">Metal-binding</keyword>
<keyword id="KW-0484">Methanogenesis</keyword>
<keyword id="KW-1185">Reference proteome</keyword>
<keyword id="KW-0677">Repeat</keyword>
<name>MTMC2_METAC</name>
<accession>P58868</accession>
<evidence type="ECO:0000250" key="1"/>
<evidence type="ECO:0000255" key="2">
    <source>
        <dbReference type="PROSITE-ProRule" id="PRU00666"/>
    </source>
</evidence>
<evidence type="ECO:0000255" key="3">
    <source>
        <dbReference type="PROSITE-ProRule" id="PRU00667"/>
    </source>
</evidence>
<evidence type="ECO:0000305" key="4"/>